<comment type="function">
    <text evidence="1">Catalyzes the condensation of carbamoyl phosphate and aspartate to form carbamoyl aspartate and inorganic phosphate, the committed step in the de novo pyrimidine nucleotide biosynthesis pathway.</text>
</comment>
<comment type="catalytic activity">
    <reaction evidence="1">
        <text>carbamoyl phosphate + L-aspartate = N-carbamoyl-L-aspartate + phosphate + H(+)</text>
        <dbReference type="Rhea" id="RHEA:20013"/>
        <dbReference type="ChEBI" id="CHEBI:15378"/>
        <dbReference type="ChEBI" id="CHEBI:29991"/>
        <dbReference type="ChEBI" id="CHEBI:32814"/>
        <dbReference type="ChEBI" id="CHEBI:43474"/>
        <dbReference type="ChEBI" id="CHEBI:58228"/>
        <dbReference type="EC" id="2.1.3.2"/>
    </reaction>
</comment>
<comment type="pathway">
    <text evidence="1">Pyrimidine metabolism; UMP biosynthesis via de novo pathway; (S)-dihydroorotate from bicarbonate: step 2/3.</text>
</comment>
<comment type="subunit">
    <text evidence="1">Heterododecamer (2C3:3R2) of six catalytic PyrB chains organized as two trimers (C3), and six regulatory PyrI chains organized as three dimers (R2).</text>
</comment>
<comment type="similarity">
    <text evidence="1">Belongs to the aspartate/ornithine carbamoyltransferase superfamily. ATCase family.</text>
</comment>
<protein>
    <recommendedName>
        <fullName evidence="1">Aspartate carbamoyltransferase catalytic subunit</fullName>
        <ecNumber evidence="1">2.1.3.2</ecNumber>
    </recommendedName>
    <alternativeName>
        <fullName evidence="1">Aspartate transcarbamylase</fullName>
        <shortName evidence="1">ATCase</shortName>
    </alternativeName>
</protein>
<name>PYRB_AZOVD</name>
<dbReference type="EC" id="2.1.3.2" evidence="1"/>
<dbReference type="EMBL" id="CP001157">
    <property type="protein sequence ID" value="ACO76572.1"/>
    <property type="molecule type" value="Genomic_DNA"/>
</dbReference>
<dbReference type="RefSeq" id="WP_012699000.1">
    <property type="nucleotide sequence ID" value="NC_012560.1"/>
</dbReference>
<dbReference type="SMR" id="C1DI75"/>
<dbReference type="STRING" id="322710.Avin_03120"/>
<dbReference type="EnsemblBacteria" id="ACO76572">
    <property type="protein sequence ID" value="ACO76572"/>
    <property type="gene ID" value="Avin_03120"/>
</dbReference>
<dbReference type="GeneID" id="88183765"/>
<dbReference type="KEGG" id="avn:Avin_03120"/>
<dbReference type="eggNOG" id="COG0540">
    <property type="taxonomic scope" value="Bacteria"/>
</dbReference>
<dbReference type="HOGENOM" id="CLU_043846_2_0_6"/>
<dbReference type="OrthoDB" id="9774690at2"/>
<dbReference type="UniPathway" id="UPA00070">
    <property type="reaction ID" value="UER00116"/>
</dbReference>
<dbReference type="Proteomes" id="UP000002424">
    <property type="component" value="Chromosome"/>
</dbReference>
<dbReference type="GO" id="GO:0005829">
    <property type="term" value="C:cytosol"/>
    <property type="evidence" value="ECO:0007669"/>
    <property type="project" value="TreeGrafter"/>
</dbReference>
<dbReference type="GO" id="GO:0016597">
    <property type="term" value="F:amino acid binding"/>
    <property type="evidence" value="ECO:0007669"/>
    <property type="project" value="InterPro"/>
</dbReference>
<dbReference type="GO" id="GO:0004070">
    <property type="term" value="F:aspartate carbamoyltransferase activity"/>
    <property type="evidence" value="ECO:0007669"/>
    <property type="project" value="UniProtKB-UniRule"/>
</dbReference>
<dbReference type="GO" id="GO:0006207">
    <property type="term" value="P:'de novo' pyrimidine nucleobase biosynthetic process"/>
    <property type="evidence" value="ECO:0007669"/>
    <property type="project" value="InterPro"/>
</dbReference>
<dbReference type="GO" id="GO:0044205">
    <property type="term" value="P:'de novo' UMP biosynthetic process"/>
    <property type="evidence" value="ECO:0007669"/>
    <property type="project" value="UniProtKB-UniRule"/>
</dbReference>
<dbReference type="GO" id="GO:0006520">
    <property type="term" value="P:amino acid metabolic process"/>
    <property type="evidence" value="ECO:0007669"/>
    <property type="project" value="InterPro"/>
</dbReference>
<dbReference type="FunFam" id="3.40.50.1370:FF:000006">
    <property type="entry name" value="Aspartate carbamoyltransferase"/>
    <property type="match status" value="1"/>
</dbReference>
<dbReference type="Gene3D" id="3.40.50.1370">
    <property type="entry name" value="Aspartate/ornithine carbamoyltransferase"/>
    <property type="match status" value="2"/>
</dbReference>
<dbReference type="HAMAP" id="MF_00001">
    <property type="entry name" value="Asp_carb_tr"/>
    <property type="match status" value="1"/>
</dbReference>
<dbReference type="InterPro" id="IPR006132">
    <property type="entry name" value="Asp/Orn_carbamoyltranf_P-bd"/>
</dbReference>
<dbReference type="InterPro" id="IPR006130">
    <property type="entry name" value="Asp/Orn_carbamoylTrfase"/>
</dbReference>
<dbReference type="InterPro" id="IPR036901">
    <property type="entry name" value="Asp/Orn_carbamoylTrfase_sf"/>
</dbReference>
<dbReference type="InterPro" id="IPR002082">
    <property type="entry name" value="Asp_carbamoyltransf"/>
</dbReference>
<dbReference type="InterPro" id="IPR006131">
    <property type="entry name" value="Asp_carbamoyltransf_Asp/Orn-bd"/>
</dbReference>
<dbReference type="NCBIfam" id="TIGR00670">
    <property type="entry name" value="asp_carb_tr"/>
    <property type="match status" value="1"/>
</dbReference>
<dbReference type="NCBIfam" id="NF002032">
    <property type="entry name" value="PRK00856.1"/>
    <property type="match status" value="1"/>
</dbReference>
<dbReference type="PANTHER" id="PTHR45753:SF6">
    <property type="entry name" value="ASPARTATE CARBAMOYLTRANSFERASE"/>
    <property type="match status" value="1"/>
</dbReference>
<dbReference type="PANTHER" id="PTHR45753">
    <property type="entry name" value="ORNITHINE CARBAMOYLTRANSFERASE, MITOCHONDRIAL"/>
    <property type="match status" value="1"/>
</dbReference>
<dbReference type="Pfam" id="PF00185">
    <property type="entry name" value="OTCace"/>
    <property type="match status" value="1"/>
</dbReference>
<dbReference type="Pfam" id="PF02729">
    <property type="entry name" value="OTCace_N"/>
    <property type="match status" value="1"/>
</dbReference>
<dbReference type="PRINTS" id="PR00100">
    <property type="entry name" value="AOTCASE"/>
</dbReference>
<dbReference type="PRINTS" id="PR00101">
    <property type="entry name" value="ATCASE"/>
</dbReference>
<dbReference type="SUPFAM" id="SSF53671">
    <property type="entry name" value="Aspartate/ornithine carbamoyltransferase"/>
    <property type="match status" value="1"/>
</dbReference>
<dbReference type="PROSITE" id="PS00097">
    <property type="entry name" value="CARBAMOYLTRANSFERASE"/>
    <property type="match status" value="1"/>
</dbReference>
<organism>
    <name type="scientific">Azotobacter vinelandii (strain DJ / ATCC BAA-1303)</name>
    <dbReference type="NCBI Taxonomy" id="322710"/>
    <lineage>
        <taxon>Bacteria</taxon>
        <taxon>Pseudomonadati</taxon>
        <taxon>Pseudomonadota</taxon>
        <taxon>Gammaproteobacteria</taxon>
        <taxon>Pseudomonadales</taxon>
        <taxon>Pseudomonadaceae</taxon>
        <taxon>Azotobacter</taxon>
    </lineage>
</organism>
<gene>
    <name evidence="1" type="primary">pyrB</name>
    <name type="ordered locus">Avin_03120</name>
</gene>
<evidence type="ECO:0000255" key="1">
    <source>
        <dbReference type="HAMAP-Rule" id="MF_00001"/>
    </source>
</evidence>
<keyword id="KW-0665">Pyrimidine biosynthesis</keyword>
<keyword id="KW-0808">Transferase</keyword>
<sequence length="336" mass="36910">MTPNDAKRPLQLNDQGRLRHFLSLDGLSRELLTEILDTADSFLEVGTRAVKKVPLLRGRTVCNVFFENSTRTRTTFEMAAQRLSADVITLNVSTSSTSKGETLFDTLRNLEAMAADMFVIRHADSGAAHFIAEHVCPDVAVINGGDGRHAHPTQGMLDMLTIRRHKGGFENLSVAIVGDILHSRVARSDMLALRALGCPDIRVIGPKTLLPMGLEQYGVRVFHDLDEGLRDVDVVIMLRLQRERMQGGLLPSQGEFYRLYGLSTARLARARPDAIVMHPGPINRGVEIESAVADGAQSVILNQVTYGIAVRMAVLSMAMSGQTAQRQLNSESEEQI</sequence>
<proteinExistence type="inferred from homology"/>
<accession>C1DI75</accession>
<reference key="1">
    <citation type="journal article" date="2009" name="J. Bacteriol.">
        <title>Genome sequence of Azotobacter vinelandii, an obligate aerobe specialized to support diverse anaerobic metabolic processes.</title>
        <authorList>
            <person name="Setubal J.C."/>
            <person name="Dos Santos P."/>
            <person name="Goldman B.S."/>
            <person name="Ertesvaag H."/>
            <person name="Espin G."/>
            <person name="Rubio L.M."/>
            <person name="Valla S."/>
            <person name="Almeida N.F."/>
            <person name="Balasubramanian D."/>
            <person name="Cromes L."/>
            <person name="Curatti L."/>
            <person name="Du Z."/>
            <person name="Godsy E."/>
            <person name="Goodner B."/>
            <person name="Hellner-Burris K."/>
            <person name="Hernandez J.A."/>
            <person name="Houmiel K."/>
            <person name="Imperial J."/>
            <person name="Kennedy C."/>
            <person name="Larson T.J."/>
            <person name="Latreille P."/>
            <person name="Ligon L.S."/>
            <person name="Lu J."/>
            <person name="Maerk M."/>
            <person name="Miller N.M."/>
            <person name="Norton S."/>
            <person name="O'Carroll I.P."/>
            <person name="Paulsen I."/>
            <person name="Raulfs E.C."/>
            <person name="Roemer R."/>
            <person name="Rosser J."/>
            <person name="Segura D."/>
            <person name="Slater S."/>
            <person name="Stricklin S.L."/>
            <person name="Studholme D.J."/>
            <person name="Sun J."/>
            <person name="Viana C.J."/>
            <person name="Wallin E."/>
            <person name="Wang B."/>
            <person name="Wheeler C."/>
            <person name="Zhu H."/>
            <person name="Dean D.R."/>
            <person name="Dixon R."/>
            <person name="Wood D."/>
        </authorList>
    </citation>
    <scope>NUCLEOTIDE SEQUENCE [LARGE SCALE GENOMIC DNA]</scope>
    <source>
        <strain>DJ / ATCC BAA-1303</strain>
    </source>
</reference>
<feature type="chain" id="PRO_1000201583" description="Aspartate carbamoyltransferase catalytic subunit">
    <location>
        <begin position="1"/>
        <end position="336"/>
    </location>
</feature>
<feature type="binding site" evidence="1">
    <location>
        <position position="71"/>
    </location>
    <ligand>
        <name>carbamoyl phosphate</name>
        <dbReference type="ChEBI" id="CHEBI:58228"/>
    </ligand>
</feature>
<feature type="binding site" evidence="1">
    <location>
        <position position="72"/>
    </location>
    <ligand>
        <name>carbamoyl phosphate</name>
        <dbReference type="ChEBI" id="CHEBI:58228"/>
    </ligand>
</feature>
<feature type="binding site" evidence="1">
    <location>
        <position position="99"/>
    </location>
    <ligand>
        <name>L-aspartate</name>
        <dbReference type="ChEBI" id="CHEBI:29991"/>
    </ligand>
</feature>
<feature type="binding site" evidence="1">
    <location>
        <position position="121"/>
    </location>
    <ligand>
        <name>carbamoyl phosphate</name>
        <dbReference type="ChEBI" id="CHEBI:58228"/>
    </ligand>
</feature>
<feature type="binding site" evidence="1">
    <location>
        <position position="151"/>
    </location>
    <ligand>
        <name>carbamoyl phosphate</name>
        <dbReference type="ChEBI" id="CHEBI:58228"/>
    </ligand>
</feature>
<feature type="binding site" evidence="1">
    <location>
        <position position="154"/>
    </location>
    <ligand>
        <name>carbamoyl phosphate</name>
        <dbReference type="ChEBI" id="CHEBI:58228"/>
    </ligand>
</feature>
<feature type="binding site" evidence="1">
    <location>
        <position position="184"/>
    </location>
    <ligand>
        <name>L-aspartate</name>
        <dbReference type="ChEBI" id="CHEBI:29991"/>
    </ligand>
</feature>
<feature type="binding site" evidence="1">
    <location>
        <position position="239"/>
    </location>
    <ligand>
        <name>L-aspartate</name>
        <dbReference type="ChEBI" id="CHEBI:29991"/>
    </ligand>
</feature>
<feature type="binding site" evidence="1">
    <location>
        <position position="280"/>
    </location>
    <ligand>
        <name>carbamoyl phosphate</name>
        <dbReference type="ChEBI" id="CHEBI:58228"/>
    </ligand>
</feature>
<feature type="binding site" evidence="1">
    <location>
        <position position="281"/>
    </location>
    <ligand>
        <name>carbamoyl phosphate</name>
        <dbReference type="ChEBI" id="CHEBI:58228"/>
    </ligand>
</feature>